<dbReference type="EC" id="1.8.4.12" evidence="1"/>
<dbReference type="EMBL" id="CU928145">
    <property type="protein sequence ID" value="CAU97806.1"/>
    <property type="molecule type" value="Genomic_DNA"/>
</dbReference>
<dbReference type="RefSeq" id="WP_001284618.1">
    <property type="nucleotide sequence ID" value="NZ_CP028304.1"/>
</dbReference>
<dbReference type="SMR" id="B7L6Q3"/>
<dbReference type="GeneID" id="93775987"/>
<dbReference type="KEGG" id="eck:EC55989_1947"/>
<dbReference type="HOGENOM" id="CLU_031040_8_5_6"/>
<dbReference type="Proteomes" id="UP000000746">
    <property type="component" value="Chromosome"/>
</dbReference>
<dbReference type="GO" id="GO:0005737">
    <property type="term" value="C:cytoplasm"/>
    <property type="evidence" value="ECO:0007669"/>
    <property type="project" value="TreeGrafter"/>
</dbReference>
<dbReference type="GO" id="GO:0033743">
    <property type="term" value="F:peptide-methionine (R)-S-oxide reductase activity"/>
    <property type="evidence" value="ECO:0007669"/>
    <property type="project" value="UniProtKB-UniRule"/>
</dbReference>
<dbReference type="GO" id="GO:0008270">
    <property type="term" value="F:zinc ion binding"/>
    <property type="evidence" value="ECO:0007669"/>
    <property type="project" value="UniProtKB-UniRule"/>
</dbReference>
<dbReference type="GO" id="GO:0030091">
    <property type="term" value="P:protein repair"/>
    <property type="evidence" value="ECO:0007669"/>
    <property type="project" value="InterPro"/>
</dbReference>
<dbReference type="GO" id="GO:0006979">
    <property type="term" value="P:response to oxidative stress"/>
    <property type="evidence" value="ECO:0007669"/>
    <property type="project" value="InterPro"/>
</dbReference>
<dbReference type="FunFam" id="2.170.150.20:FF:000001">
    <property type="entry name" value="Peptide methionine sulfoxide reductase MsrB"/>
    <property type="match status" value="1"/>
</dbReference>
<dbReference type="Gene3D" id="2.170.150.20">
    <property type="entry name" value="Peptide methionine sulfoxide reductase"/>
    <property type="match status" value="1"/>
</dbReference>
<dbReference type="HAMAP" id="MF_01400">
    <property type="entry name" value="MsrB"/>
    <property type="match status" value="1"/>
</dbReference>
<dbReference type="InterPro" id="IPR028427">
    <property type="entry name" value="Met_Sox_Rdtase_MsrB"/>
</dbReference>
<dbReference type="InterPro" id="IPR002579">
    <property type="entry name" value="Met_Sox_Rdtase_MsrB_dom"/>
</dbReference>
<dbReference type="InterPro" id="IPR011057">
    <property type="entry name" value="Mss4-like_sf"/>
</dbReference>
<dbReference type="NCBIfam" id="TIGR00357">
    <property type="entry name" value="peptide-methionine (R)-S-oxide reductase MsrB"/>
    <property type="match status" value="1"/>
</dbReference>
<dbReference type="PANTHER" id="PTHR10173">
    <property type="entry name" value="METHIONINE SULFOXIDE REDUCTASE"/>
    <property type="match status" value="1"/>
</dbReference>
<dbReference type="PANTHER" id="PTHR10173:SF52">
    <property type="entry name" value="METHIONINE-R-SULFOXIDE REDUCTASE B1"/>
    <property type="match status" value="1"/>
</dbReference>
<dbReference type="Pfam" id="PF01641">
    <property type="entry name" value="SelR"/>
    <property type="match status" value="1"/>
</dbReference>
<dbReference type="SUPFAM" id="SSF51316">
    <property type="entry name" value="Mss4-like"/>
    <property type="match status" value="1"/>
</dbReference>
<dbReference type="PROSITE" id="PS51790">
    <property type="entry name" value="MSRB"/>
    <property type="match status" value="1"/>
</dbReference>
<name>MSRB_ECO55</name>
<evidence type="ECO:0000255" key="1">
    <source>
        <dbReference type="HAMAP-Rule" id="MF_01400"/>
    </source>
</evidence>
<evidence type="ECO:0000255" key="2">
    <source>
        <dbReference type="PROSITE-ProRule" id="PRU01126"/>
    </source>
</evidence>
<comment type="catalytic activity">
    <reaction evidence="1">
        <text>L-methionyl-[protein] + [thioredoxin]-disulfide + H2O = L-methionyl-(R)-S-oxide-[protein] + [thioredoxin]-dithiol</text>
        <dbReference type="Rhea" id="RHEA:24164"/>
        <dbReference type="Rhea" id="RHEA-COMP:10698"/>
        <dbReference type="Rhea" id="RHEA-COMP:10700"/>
        <dbReference type="Rhea" id="RHEA-COMP:12313"/>
        <dbReference type="Rhea" id="RHEA-COMP:12314"/>
        <dbReference type="ChEBI" id="CHEBI:15377"/>
        <dbReference type="ChEBI" id="CHEBI:16044"/>
        <dbReference type="ChEBI" id="CHEBI:29950"/>
        <dbReference type="ChEBI" id="CHEBI:45764"/>
        <dbReference type="ChEBI" id="CHEBI:50058"/>
        <dbReference type="EC" id="1.8.4.12"/>
    </reaction>
</comment>
<comment type="cofactor">
    <cofactor evidence="1">
        <name>Zn(2+)</name>
        <dbReference type="ChEBI" id="CHEBI:29105"/>
    </cofactor>
    <text evidence="1">Binds 1 zinc ion per subunit. The zinc ion is important for the structural integrity of the protein.</text>
</comment>
<comment type="similarity">
    <text evidence="1">Belongs to the MsrB Met sulfoxide reductase family.</text>
</comment>
<keyword id="KW-0479">Metal-binding</keyword>
<keyword id="KW-0560">Oxidoreductase</keyword>
<keyword id="KW-1185">Reference proteome</keyword>
<keyword id="KW-0862">Zinc</keyword>
<sequence>MANKPSAEELKKNLSEMQFYVTQNHGTEPPFTGRLLHNKRDGVYHCLICDAPLFHSQTKYDSGCGWPSFYEPVSEESIRYIKDLSHGMQRIEIRCGNCDAHLGHVFPDGPQPTGERYCVNSASLRFTDGENGEEING</sequence>
<organism>
    <name type="scientific">Escherichia coli (strain 55989 / EAEC)</name>
    <dbReference type="NCBI Taxonomy" id="585055"/>
    <lineage>
        <taxon>Bacteria</taxon>
        <taxon>Pseudomonadati</taxon>
        <taxon>Pseudomonadota</taxon>
        <taxon>Gammaproteobacteria</taxon>
        <taxon>Enterobacterales</taxon>
        <taxon>Enterobacteriaceae</taxon>
        <taxon>Escherichia</taxon>
    </lineage>
</organism>
<proteinExistence type="inferred from homology"/>
<reference key="1">
    <citation type="journal article" date="2009" name="PLoS Genet.">
        <title>Organised genome dynamics in the Escherichia coli species results in highly diverse adaptive paths.</title>
        <authorList>
            <person name="Touchon M."/>
            <person name="Hoede C."/>
            <person name="Tenaillon O."/>
            <person name="Barbe V."/>
            <person name="Baeriswyl S."/>
            <person name="Bidet P."/>
            <person name="Bingen E."/>
            <person name="Bonacorsi S."/>
            <person name="Bouchier C."/>
            <person name="Bouvet O."/>
            <person name="Calteau A."/>
            <person name="Chiapello H."/>
            <person name="Clermont O."/>
            <person name="Cruveiller S."/>
            <person name="Danchin A."/>
            <person name="Diard M."/>
            <person name="Dossat C."/>
            <person name="Karoui M.E."/>
            <person name="Frapy E."/>
            <person name="Garry L."/>
            <person name="Ghigo J.M."/>
            <person name="Gilles A.M."/>
            <person name="Johnson J."/>
            <person name="Le Bouguenec C."/>
            <person name="Lescat M."/>
            <person name="Mangenot S."/>
            <person name="Martinez-Jehanne V."/>
            <person name="Matic I."/>
            <person name="Nassif X."/>
            <person name="Oztas S."/>
            <person name="Petit M.A."/>
            <person name="Pichon C."/>
            <person name="Rouy Z."/>
            <person name="Ruf C.S."/>
            <person name="Schneider D."/>
            <person name="Tourret J."/>
            <person name="Vacherie B."/>
            <person name="Vallenet D."/>
            <person name="Medigue C."/>
            <person name="Rocha E.P.C."/>
            <person name="Denamur E."/>
        </authorList>
    </citation>
    <scope>NUCLEOTIDE SEQUENCE [LARGE SCALE GENOMIC DNA]</scope>
    <source>
        <strain>55989 / EAEC</strain>
    </source>
</reference>
<protein>
    <recommendedName>
        <fullName evidence="1">Peptide methionine sulfoxide reductase MsrB</fullName>
        <ecNumber evidence="1">1.8.4.12</ecNumber>
    </recommendedName>
    <alternativeName>
        <fullName evidence="1">Peptide-methionine (R)-S-oxide reductase</fullName>
    </alternativeName>
</protein>
<gene>
    <name evidence="1" type="primary">msrB</name>
    <name type="ordered locus">EC55989_1947</name>
</gene>
<accession>B7L6Q3</accession>
<feature type="chain" id="PRO_1000184550" description="Peptide methionine sulfoxide reductase MsrB">
    <location>
        <begin position="1"/>
        <end position="137"/>
    </location>
</feature>
<feature type="domain" description="MsrB" evidence="2">
    <location>
        <begin position="7"/>
        <end position="129"/>
    </location>
</feature>
<feature type="active site" description="Nucleophile" evidence="2">
    <location>
        <position position="118"/>
    </location>
</feature>
<feature type="binding site" evidence="2">
    <location>
        <position position="46"/>
    </location>
    <ligand>
        <name>Zn(2+)</name>
        <dbReference type="ChEBI" id="CHEBI:29105"/>
    </ligand>
</feature>
<feature type="binding site" evidence="2">
    <location>
        <position position="49"/>
    </location>
    <ligand>
        <name>Zn(2+)</name>
        <dbReference type="ChEBI" id="CHEBI:29105"/>
    </ligand>
</feature>
<feature type="binding site" evidence="2">
    <location>
        <position position="95"/>
    </location>
    <ligand>
        <name>Zn(2+)</name>
        <dbReference type="ChEBI" id="CHEBI:29105"/>
    </ligand>
</feature>
<feature type="binding site" evidence="2">
    <location>
        <position position="98"/>
    </location>
    <ligand>
        <name>Zn(2+)</name>
        <dbReference type="ChEBI" id="CHEBI:29105"/>
    </ligand>
</feature>